<proteinExistence type="evidence at protein level"/>
<accession>P29461</accession>
<accession>D6W2R4</accession>
<evidence type="ECO:0000255" key="1">
    <source>
        <dbReference type="PROSITE-ProRule" id="PRU00160"/>
    </source>
</evidence>
<evidence type="ECO:0000255" key="2">
    <source>
        <dbReference type="PROSITE-ProRule" id="PRU10044"/>
    </source>
</evidence>
<evidence type="ECO:0000256" key="3">
    <source>
        <dbReference type="SAM" id="MobiDB-lite"/>
    </source>
</evidence>
<evidence type="ECO:0000269" key="4">
    <source>
    </source>
</evidence>
<evidence type="ECO:0000269" key="5">
    <source>
    </source>
</evidence>
<evidence type="ECO:0000269" key="6">
    <source>
    </source>
</evidence>
<evidence type="ECO:0000269" key="7">
    <source>
    </source>
</evidence>
<evidence type="ECO:0000305" key="8"/>
<evidence type="ECO:0007744" key="9">
    <source>
    </source>
</evidence>
<evidence type="ECO:0007744" key="10">
    <source>
    </source>
</evidence>
<gene>
    <name type="primary">PTP2</name>
    <name type="ordered locus">YOR208W</name>
</gene>
<organism>
    <name type="scientific">Saccharomyces cerevisiae (strain ATCC 204508 / S288c)</name>
    <name type="common">Baker's yeast</name>
    <dbReference type="NCBI Taxonomy" id="559292"/>
    <lineage>
        <taxon>Eukaryota</taxon>
        <taxon>Fungi</taxon>
        <taxon>Dikarya</taxon>
        <taxon>Ascomycota</taxon>
        <taxon>Saccharomycotina</taxon>
        <taxon>Saccharomycetes</taxon>
        <taxon>Saccharomycetales</taxon>
        <taxon>Saccharomycetaceae</taxon>
        <taxon>Saccharomyces</taxon>
    </lineage>
</organism>
<dbReference type="EC" id="3.1.3.48"/>
<dbReference type="EMBL" id="M85287">
    <property type="status" value="NOT_ANNOTATED_CDS"/>
    <property type="molecule type" value="Genomic_DNA"/>
</dbReference>
<dbReference type="EMBL" id="M82872">
    <property type="protein sequence ID" value="AAA34922.1"/>
    <property type="molecule type" value="Genomic_DNA"/>
</dbReference>
<dbReference type="EMBL" id="M38723">
    <property type="protein sequence ID" value="AAB59323.1"/>
    <property type="molecule type" value="Genomic_DNA"/>
</dbReference>
<dbReference type="EMBL" id="Z75116">
    <property type="protein sequence ID" value="CAA99423.1"/>
    <property type="molecule type" value="Genomic_DNA"/>
</dbReference>
<dbReference type="EMBL" id="BK006948">
    <property type="protein sequence ID" value="DAA10980.1"/>
    <property type="molecule type" value="Genomic_DNA"/>
</dbReference>
<dbReference type="PIR" id="S67100">
    <property type="entry name" value="S67100"/>
</dbReference>
<dbReference type="RefSeq" id="NP_014851.3">
    <property type="nucleotide sequence ID" value="NM_001183627.3"/>
</dbReference>
<dbReference type="SMR" id="P29461"/>
<dbReference type="BioGRID" id="34603">
    <property type="interactions" value="95"/>
</dbReference>
<dbReference type="DIP" id="DIP-2369N"/>
<dbReference type="FunCoup" id="P29461">
    <property type="interactions" value="224"/>
</dbReference>
<dbReference type="IntAct" id="P29461">
    <property type="interactions" value="8"/>
</dbReference>
<dbReference type="MINT" id="P29461"/>
<dbReference type="STRING" id="4932.YOR208W"/>
<dbReference type="iPTMnet" id="P29461"/>
<dbReference type="PaxDb" id="4932-YOR208W"/>
<dbReference type="PeptideAtlas" id="P29461"/>
<dbReference type="EnsemblFungi" id="YOR208W_mRNA">
    <property type="protein sequence ID" value="YOR208W"/>
    <property type="gene ID" value="YOR208W"/>
</dbReference>
<dbReference type="GeneID" id="854383"/>
<dbReference type="KEGG" id="sce:YOR208W"/>
<dbReference type="AGR" id="SGD:S000005734"/>
<dbReference type="SGD" id="S000005734">
    <property type="gene designation" value="PTP2"/>
</dbReference>
<dbReference type="VEuPathDB" id="FungiDB:YOR208W"/>
<dbReference type="eggNOG" id="KOG0789">
    <property type="taxonomic scope" value="Eukaryota"/>
</dbReference>
<dbReference type="HOGENOM" id="CLU_009242_0_0_1"/>
<dbReference type="InParanoid" id="P29461"/>
<dbReference type="OMA" id="RKWDIYW"/>
<dbReference type="OrthoDB" id="6058203at2759"/>
<dbReference type="BioCyc" id="YEAST:YOR208W-MONOMER"/>
<dbReference type="Reactome" id="R-SCE-5675221">
    <property type="pathway name" value="Negative regulation of MAPK pathway"/>
</dbReference>
<dbReference type="Reactome" id="R-SCE-6798695">
    <property type="pathway name" value="Neutrophil degranulation"/>
</dbReference>
<dbReference type="BioGRID-ORCS" id="854383">
    <property type="hits" value="1 hit in 10 CRISPR screens"/>
</dbReference>
<dbReference type="PRO" id="PR:P29461"/>
<dbReference type="Proteomes" id="UP000002311">
    <property type="component" value="Chromosome XV"/>
</dbReference>
<dbReference type="RNAct" id="P29461">
    <property type="molecule type" value="protein"/>
</dbReference>
<dbReference type="GO" id="GO:0005737">
    <property type="term" value="C:cytoplasm"/>
    <property type="evidence" value="ECO:0007669"/>
    <property type="project" value="UniProtKB-SubCell"/>
</dbReference>
<dbReference type="GO" id="GO:0005634">
    <property type="term" value="C:nucleus"/>
    <property type="evidence" value="ECO:0000314"/>
    <property type="project" value="SGD"/>
</dbReference>
<dbReference type="GO" id="GO:0004725">
    <property type="term" value="F:protein tyrosine phosphatase activity"/>
    <property type="evidence" value="ECO:0000314"/>
    <property type="project" value="SGD"/>
</dbReference>
<dbReference type="GO" id="GO:0071474">
    <property type="term" value="P:cellular hyperosmotic response"/>
    <property type="evidence" value="ECO:0000315"/>
    <property type="project" value="SGD"/>
</dbReference>
<dbReference type="GO" id="GO:0071852">
    <property type="term" value="P:fungal-type cell wall organization or biogenesis"/>
    <property type="evidence" value="ECO:0000315"/>
    <property type="project" value="SGD"/>
</dbReference>
<dbReference type="GO" id="GO:0051457">
    <property type="term" value="P:maintenance of protein location in nucleus"/>
    <property type="evidence" value="ECO:0000315"/>
    <property type="project" value="SGD"/>
</dbReference>
<dbReference type="GO" id="GO:1903138">
    <property type="term" value="P:negative regulation of cell integrity MAPK cascade"/>
    <property type="evidence" value="ECO:0000314"/>
    <property type="project" value="SGD"/>
</dbReference>
<dbReference type="GO" id="GO:0071507">
    <property type="term" value="P:pheromone response MAPK cascade"/>
    <property type="evidence" value="ECO:0000315"/>
    <property type="project" value="SGD"/>
</dbReference>
<dbReference type="GO" id="GO:0043937">
    <property type="term" value="P:regulation of sporulation"/>
    <property type="evidence" value="ECO:0000316"/>
    <property type="project" value="SGD"/>
</dbReference>
<dbReference type="GO" id="GO:0007165">
    <property type="term" value="P:signal transduction"/>
    <property type="evidence" value="ECO:0000318"/>
    <property type="project" value="GO_Central"/>
</dbReference>
<dbReference type="CDD" id="cd18533">
    <property type="entry name" value="PTP_fungal"/>
    <property type="match status" value="1"/>
</dbReference>
<dbReference type="FunFam" id="3.90.190.10:FF:000158">
    <property type="entry name" value="Tyrosine phosphatase"/>
    <property type="match status" value="1"/>
</dbReference>
<dbReference type="Gene3D" id="3.90.190.10">
    <property type="entry name" value="Protein tyrosine phosphatase superfamily"/>
    <property type="match status" value="1"/>
</dbReference>
<dbReference type="InterPro" id="IPR029021">
    <property type="entry name" value="Prot-tyrosine_phosphatase-like"/>
</dbReference>
<dbReference type="InterPro" id="IPR050348">
    <property type="entry name" value="Protein-Tyr_Phosphatase"/>
</dbReference>
<dbReference type="InterPro" id="IPR000242">
    <property type="entry name" value="PTP_cat"/>
</dbReference>
<dbReference type="InterPro" id="IPR016130">
    <property type="entry name" value="Tyr_Pase_AS"/>
</dbReference>
<dbReference type="InterPro" id="IPR003595">
    <property type="entry name" value="Tyr_Pase_cat"/>
</dbReference>
<dbReference type="InterPro" id="IPR000387">
    <property type="entry name" value="Tyr_Pase_dom"/>
</dbReference>
<dbReference type="PANTHER" id="PTHR19134:SF561">
    <property type="entry name" value="PROTEIN TYROSINE PHOSPHATASE 36E, ISOFORM A"/>
    <property type="match status" value="1"/>
</dbReference>
<dbReference type="PANTHER" id="PTHR19134">
    <property type="entry name" value="RECEPTOR-TYPE TYROSINE-PROTEIN PHOSPHATASE"/>
    <property type="match status" value="1"/>
</dbReference>
<dbReference type="Pfam" id="PF00102">
    <property type="entry name" value="Y_phosphatase"/>
    <property type="match status" value="1"/>
</dbReference>
<dbReference type="PRINTS" id="PR00700">
    <property type="entry name" value="PRTYPHPHTASE"/>
</dbReference>
<dbReference type="SMART" id="SM00194">
    <property type="entry name" value="PTPc"/>
    <property type="match status" value="1"/>
</dbReference>
<dbReference type="SMART" id="SM00404">
    <property type="entry name" value="PTPc_motif"/>
    <property type="match status" value="1"/>
</dbReference>
<dbReference type="SUPFAM" id="SSF52799">
    <property type="entry name" value="(Phosphotyrosine protein) phosphatases II"/>
    <property type="match status" value="1"/>
</dbReference>
<dbReference type="PROSITE" id="PS00383">
    <property type="entry name" value="TYR_PHOSPHATASE_1"/>
    <property type="match status" value="1"/>
</dbReference>
<dbReference type="PROSITE" id="PS50056">
    <property type="entry name" value="TYR_PHOSPHATASE_2"/>
    <property type="match status" value="1"/>
</dbReference>
<dbReference type="PROSITE" id="PS50055">
    <property type="entry name" value="TYR_PHOSPHATASE_PTP"/>
    <property type="match status" value="1"/>
</dbReference>
<comment type="function">
    <text evidence="6 7">Major phosphatase responsible with PTP3 for tyrosine dephosphorylation of MAP kinase HOG1 to inactivate its activity. May also be involved in the regulation of MAP kinase FUS3. May be implicated in the ubiquitin-mediated protein degradation.</text>
</comment>
<comment type="catalytic activity">
    <reaction evidence="2">
        <text>O-phospho-L-tyrosyl-[protein] + H2O = L-tyrosyl-[protein] + phosphate</text>
        <dbReference type="Rhea" id="RHEA:10684"/>
        <dbReference type="Rhea" id="RHEA-COMP:10136"/>
        <dbReference type="Rhea" id="RHEA-COMP:20101"/>
        <dbReference type="ChEBI" id="CHEBI:15377"/>
        <dbReference type="ChEBI" id="CHEBI:43474"/>
        <dbReference type="ChEBI" id="CHEBI:46858"/>
        <dbReference type="ChEBI" id="CHEBI:61978"/>
        <dbReference type="EC" id="3.1.3.48"/>
    </reaction>
</comment>
<comment type="subunit">
    <text evidence="6 7">Interacts with HOG1.</text>
</comment>
<comment type="subcellular location">
    <subcellularLocation>
        <location evidence="4">Cytoplasm</location>
    </subcellularLocation>
    <subcellularLocation>
        <location evidence="4">Nucleus</location>
    </subcellularLocation>
</comment>
<comment type="miscellaneous">
    <text evidence="5">Present with 149 molecules/cell in log phase SD medium.</text>
</comment>
<comment type="similarity">
    <text evidence="8">Belongs to the protein-tyrosine phosphatase family. Non-receptor class subfamily.</text>
</comment>
<protein>
    <recommendedName>
        <fullName>Tyrosine-protein phosphatase 2</fullName>
        <ecNumber>3.1.3.48</ecNumber>
    </recommendedName>
    <alternativeName>
        <fullName>Protein-tyrosine phosphatase 2</fullName>
        <shortName>PTPase 2</shortName>
    </alternativeName>
</protein>
<sequence>MDRIAQQYRNGKRDNNGNRMASSAISEKGHIQVNQTRTPGQMPVYRGETINLSNLPQNQIKPCKDLDDVNIRRNNSNRHSKILLLDLCAGPNTNSFLGNTNAKDITVLSLPLPSTLVKRSNYPFENLLKNYLGSDEKYIEFTKIIKDYDIFIFSDSFSRISSCLKTTFCLIEKFKKFICHFFPSPYLKFFLLEGSLNDSKAPSLGKNKKNCILPKLDLNLNVNLTSRSTLNLRINIPPPNDSNKIFLQSLKKDLIHYSPNSLQKFFQFNMPADLAPNDTILPNWLKFCSVKENEKVILKKLFNNFETLENFEMQRLEKCLKFKKKPLHQKQLSQKQRGPQSTDDSKLYSLTSLQRQYKSSLKSNIQKNQKLKLIIPKNNTSSSPSPLSSDDTIMSPINDYELTEGIQSFTKNRYSNILPYEHSRVKLPHSPKPPAVSEASTTETKTDKSYPMCPVDAKNHSCKPNDYINANYLKLTQINPDFKYIATQAPLPSTMDDFWKVITLNKVKVIISLNSDDELNLRKWDIYWNNLSYSNHTIKLQNTWENICNINGCVLRVFQVKKTAPQNDNISQDCDLPHNGDLTSITMAVSEPFIVYQLQYKNWLDSCGVDMNDIIKLHKVKNSLLFNPQSFITSLEKDVCKPDLIDDNNSELHLDTANSSPLLVHCSAGCGRTGVFVTLDFLLSILSPTTNHSNKIDVWNMTQDLIFIIVNELRKQRISMVQNLTQYIACYEALLNYFALQKQIKNALPC</sequence>
<keyword id="KW-0963">Cytoplasm</keyword>
<keyword id="KW-0378">Hydrolase</keyword>
<keyword id="KW-0539">Nucleus</keyword>
<keyword id="KW-0597">Phosphoprotein</keyword>
<keyword id="KW-0904">Protein phosphatase</keyword>
<keyword id="KW-1185">Reference proteome</keyword>
<name>PTP2_YEAST</name>
<reference key="1">
    <citation type="journal article" date="1992" name="J. Biol. Chem.">
        <title>Isolation and characterization of a second protein tyrosine phosphatase gene, PTP2, from Saccharomyces cerevisiae.</title>
        <authorList>
            <person name="Guan K."/>
            <person name="Deschenes R.J."/>
            <person name="Dixon J.E."/>
        </authorList>
    </citation>
    <scope>NUCLEOTIDE SEQUENCE [GENOMIC DNA]</scope>
</reference>
<reference key="2">
    <citation type="journal article" date="1992" name="Proc. Natl. Acad. Sci. U.S.A.">
        <title>A gene encoding a putative tyrosine phosphatase suppresses lethality of an N-end rule-dependent mutant.</title>
        <authorList>
            <person name="Ota I.M."/>
            <person name="Varshavsky A."/>
        </authorList>
    </citation>
    <scope>NUCLEOTIDE SEQUENCE [GENOMIC DNA]</scope>
</reference>
<reference key="3">
    <citation type="journal article" date="1992" name="Gene">
        <title>Multiple protein tyrosine phosphatase-encoding genes in the yeast Saccharomyces cerevisiae.</title>
        <authorList>
            <person name="James P."/>
            <person name="Hall B.D."/>
            <person name="Whelen S."/>
            <person name="Craig E.A."/>
        </authorList>
    </citation>
    <scope>NUCLEOTIDE SEQUENCE [GENOMIC DNA]</scope>
</reference>
<reference key="4">
    <citation type="journal article" date="1997" name="Nature">
        <title>The nucleotide sequence of Saccharomyces cerevisiae chromosome XV.</title>
        <authorList>
            <person name="Dujon B."/>
            <person name="Albermann K."/>
            <person name="Aldea M."/>
            <person name="Alexandraki D."/>
            <person name="Ansorge W."/>
            <person name="Arino J."/>
            <person name="Benes V."/>
            <person name="Bohn C."/>
            <person name="Bolotin-Fukuhara M."/>
            <person name="Bordonne R."/>
            <person name="Boyer J."/>
            <person name="Camasses A."/>
            <person name="Casamayor A."/>
            <person name="Casas C."/>
            <person name="Cheret G."/>
            <person name="Cziepluch C."/>
            <person name="Daignan-Fornier B."/>
            <person name="Dang V.-D."/>
            <person name="de Haan M."/>
            <person name="Delius H."/>
            <person name="Durand P."/>
            <person name="Fairhead C."/>
            <person name="Feldmann H."/>
            <person name="Gaillon L."/>
            <person name="Galisson F."/>
            <person name="Gamo F.-J."/>
            <person name="Gancedo C."/>
            <person name="Goffeau A."/>
            <person name="Goulding S.E."/>
            <person name="Grivell L.A."/>
            <person name="Habbig B."/>
            <person name="Hand N.J."/>
            <person name="Hani J."/>
            <person name="Hattenhorst U."/>
            <person name="Hebling U."/>
            <person name="Hernando Y."/>
            <person name="Herrero E."/>
            <person name="Heumann K."/>
            <person name="Hiesel R."/>
            <person name="Hilger F."/>
            <person name="Hofmann B."/>
            <person name="Hollenberg C.P."/>
            <person name="Hughes B."/>
            <person name="Jauniaux J.-C."/>
            <person name="Kalogeropoulos A."/>
            <person name="Katsoulou C."/>
            <person name="Kordes E."/>
            <person name="Lafuente M.J."/>
            <person name="Landt O."/>
            <person name="Louis E.J."/>
            <person name="Maarse A.C."/>
            <person name="Madania A."/>
            <person name="Mannhaupt G."/>
            <person name="Marck C."/>
            <person name="Martin R.P."/>
            <person name="Mewes H.-W."/>
            <person name="Michaux G."/>
            <person name="Paces V."/>
            <person name="Parle-McDermott A.G."/>
            <person name="Pearson B.M."/>
            <person name="Perrin A."/>
            <person name="Pettersson B."/>
            <person name="Poch O."/>
            <person name="Pohl T.M."/>
            <person name="Poirey R."/>
            <person name="Portetelle D."/>
            <person name="Pujol A."/>
            <person name="Purnelle B."/>
            <person name="Ramezani Rad M."/>
            <person name="Rechmann S."/>
            <person name="Schwager C."/>
            <person name="Schweizer M."/>
            <person name="Sor F."/>
            <person name="Sterky F."/>
            <person name="Tarassov I.A."/>
            <person name="Teodoru C."/>
            <person name="Tettelin H."/>
            <person name="Thierry A."/>
            <person name="Tobiasch E."/>
            <person name="Tzermia M."/>
            <person name="Uhlen M."/>
            <person name="Unseld M."/>
            <person name="Valens M."/>
            <person name="Vandenbol M."/>
            <person name="Vetter I."/>
            <person name="Vlcek C."/>
            <person name="Voet M."/>
            <person name="Volckaert G."/>
            <person name="Voss H."/>
            <person name="Wambutt R."/>
            <person name="Wedler H."/>
            <person name="Wiemann S."/>
            <person name="Winsor B."/>
            <person name="Wolfe K.H."/>
            <person name="Zollner A."/>
            <person name="Zumstein E."/>
            <person name="Kleine K."/>
        </authorList>
    </citation>
    <scope>NUCLEOTIDE SEQUENCE [LARGE SCALE GENOMIC DNA]</scope>
    <source>
        <strain>ATCC 204508 / S288c</strain>
    </source>
</reference>
<reference key="5">
    <citation type="journal article" date="2014" name="G3 (Bethesda)">
        <title>The reference genome sequence of Saccharomyces cerevisiae: Then and now.</title>
        <authorList>
            <person name="Engel S.R."/>
            <person name="Dietrich F.S."/>
            <person name="Fisk D.G."/>
            <person name="Binkley G."/>
            <person name="Balakrishnan R."/>
            <person name="Costanzo M.C."/>
            <person name="Dwight S.S."/>
            <person name="Hitz B.C."/>
            <person name="Karra K."/>
            <person name="Nash R.S."/>
            <person name="Weng S."/>
            <person name="Wong E.D."/>
            <person name="Lloyd P."/>
            <person name="Skrzypek M.S."/>
            <person name="Miyasato S.R."/>
            <person name="Simison M."/>
            <person name="Cherry J.M."/>
        </authorList>
    </citation>
    <scope>GENOME REANNOTATION</scope>
    <source>
        <strain>ATCC 204508 / S288c</strain>
    </source>
</reference>
<reference key="6">
    <citation type="journal article" date="1997" name="Mol. Cell. Biol.">
        <title>Regulation of the Saccharomyces cerevisiae HOG1 mitogen-activated protein kinase by the PTP2 and PTP3 protein tyrosine phosphatases.</title>
        <authorList>
            <person name="Wurgler-Murphy S.M."/>
            <person name="Maeda T."/>
            <person name="Witten E.A."/>
            <person name="Saito H."/>
        </authorList>
    </citation>
    <scope>FUNCTION</scope>
    <scope>INTERACTION WITH HOG1</scope>
</reference>
<reference key="7">
    <citation type="journal article" date="1997" name="J. Biol. Chem.">
        <title>Two protein-tyrosine phosphatases inactivate the osmotic stress response pathway in yeast by targeting the mitogen-activated protein kinase, Hog1.</title>
        <authorList>
            <person name="Jacoby T."/>
            <person name="Flanagan H."/>
            <person name="Faykin A."/>
            <person name="Seto A.G."/>
            <person name="Mattison C.P."/>
            <person name="Ota I.M."/>
        </authorList>
    </citation>
    <scope>FUNCTION</scope>
    <scope>INTERACTION WITH HOG1</scope>
</reference>
<reference key="8">
    <citation type="journal article" date="2003" name="Nature">
        <title>Global analysis of protein localization in budding yeast.</title>
        <authorList>
            <person name="Huh W.-K."/>
            <person name="Falvo J.V."/>
            <person name="Gerke L.C."/>
            <person name="Carroll A.S."/>
            <person name="Howson R.W."/>
            <person name="Weissman J.S."/>
            <person name="O'Shea E.K."/>
        </authorList>
    </citation>
    <scope>SUBCELLULAR LOCATION [LARGE SCALE ANALYSIS]</scope>
</reference>
<reference key="9">
    <citation type="journal article" date="2003" name="Nature">
        <title>Global analysis of protein expression in yeast.</title>
        <authorList>
            <person name="Ghaemmaghami S."/>
            <person name="Huh W.-K."/>
            <person name="Bower K."/>
            <person name="Howson R.W."/>
            <person name="Belle A."/>
            <person name="Dephoure N."/>
            <person name="O'Shea E.K."/>
            <person name="Weissman J.S."/>
        </authorList>
    </citation>
    <scope>LEVEL OF PROTEIN EXPRESSION [LARGE SCALE ANALYSIS]</scope>
</reference>
<reference key="10">
    <citation type="journal article" date="2007" name="J. Proteome Res.">
        <title>Large-scale phosphorylation analysis of alpha-factor-arrested Saccharomyces cerevisiae.</title>
        <authorList>
            <person name="Li X."/>
            <person name="Gerber S.A."/>
            <person name="Rudner A.D."/>
            <person name="Beausoleil S.A."/>
            <person name="Haas W."/>
            <person name="Villen J."/>
            <person name="Elias J.E."/>
            <person name="Gygi S.P."/>
        </authorList>
    </citation>
    <scope>PHOSPHORYLATION [LARGE SCALE ANALYSIS] AT SER-258 AND SER-430</scope>
    <scope>IDENTIFICATION BY MASS SPECTROMETRY [LARGE SCALE ANALYSIS]</scope>
    <source>
        <strain>ADR376</strain>
    </source>
</reference>
<reference key="11">
    <citation type="journal article" date="2008" name="Mol. Cell. Proteomics">
        <title>A multidimensional chromatography technology for in-depth phosphoproteome analysis.</title>
        <authorList>
            <person name="Albuquerque C.P."/>
            <person name="Smolka M.B."/>
            <person name="Payne S.H."/>
            <person name="Bafna V."/>
            <person name="Eng J."/>
            <person name="Zhou H."/>
        </authorList>
    </citation>
    <scope>IDENTIFICATION BY MASS SPECTROMETRY [LARGE SCALE ANALYSIS]</scope>
</reference>
<reference key="12">
    <citation type="journal article" date="2009" name="Science">
        <title>Global analysis of Cdk1 substrate phosphorylation sites provides insights into evolution.</title>
        <authorList>
            <person name="Holt L.J."/>
            <person name="Tuch B.B."/>
            <person name="Villen J."/>
            <person name="Johnson A.D."/>
            <person name="Gygi S.P."/>
            <person name="Morgan D.O."/>
        </authorList>
    </citation>
    <scope>PHOSPHORYLATION [LARGE SCALE ANALYSIS] AT SER-430</scope>
    <scope>IDENTIFICATION BY MASS SPECTROMETRY [LARGE SCALE ANALYSIS]</scope>
</reference>
<feature type="chain" id="PRO_0000094856" description="Tyrosine-protein phosphatase 2">
    <location>
        <begin position="1"/>
        <end position="750"/>
    </location>
</feature>
<feature type="domain" description="Tyrosine-protein phosphatase" evidence="1">
    <location>
        <begin position="383"/>
        <end position="737"/>
    </location>
</feature>
<feature type="region of interest" description="Disordered" evidence="3">
    <location>
        <begin position="1"/>
        <end position="20"/>
    </location>
</feature>
<feature type="region of interest" description="Disordered" evidence="3">
    <location>
        <begin position="327"/>
        <end position="348"/>
    </location>
</feature>
<feature type="region of interest" description="Disordered" evidence="3">
    <location>
        <begin position="425"/>
        <end position="450"/>
    </location>
</feature>
<feature type="compositionally biased region" description="Polar residues" evidence="3">
    <location>
        <begin position="330"/>
        <end position="348"/>
    </location>
</feature>
<feature type="active site" description="Phosphocysteine intermediate" evidence="1 2">
    <location>
        <position position="666"/>
    </location>
</feature>
<feature type="modified residue" description="Phosphoserine" evidence="9">
    <location>
        <position position="258"/>
    </location>
</feature>
<feature type="modified residue" description="Phosphoserine" evidence="9 10">
    <location>
        <position position="430"/>
    </location>
</feature>
<feature type="sequence conflict" description="In Ref. 3; AAB59323." evidence="8" ref="3">
    <original>L</original>
    <variation>S</variation>
    <location>
        <position position="371"/>
    </location>
</feature>
<feature type="sequence conflict" description="In Ref. 1." evidence="8" ref="1">
    <original>KL</original>
    <variation>NV</variation>
    <location>
        <begin position="474"/>
        <end position="475"/>
    </location>
</feature>
<feature type="sequence conflict" description="In Ref. 3; AAB59323." evidence="8" ref="3">
    <original>SP</original>
    <variation>GA</variation>
    <location>
        <begin position="660"/>
        <end position="661"/>
    </location>
</feature>